<reference key="1">
    <citation type="journal article" date="2012" name="J. Bacteriol.">
        <title>Complete genome sequence of the anaerobic perchlorate-reducing bacterium Azospira suillum strain PS.</title>
        <authorList>
            <person name="Byrne-Bailey K.G."/>
            <person name="Coates J.D."/>
        </authorList>
    </citation>
    <scope>NUCLEOTIDE SEQUENCE [LARGE SCALE GENOMIC DNA]</scope>
    <source>
        <strain>ATCC BAA-33 / DSM 13638 / PS</strain>
    </source>
</reference>
<reference key="2">
    <citation type="journal article" date="2015" name="MBio">
        <title>Novel mechanism for scavenging of hypochlorite involving a periplasmic methionine-rich peptide and methionine sulfoxide reductase.</title>
        <authorList>
            <person name="Melnyk R.A."/>
            <person name="Youngblut M.D."/>
            <person name="Clark I.C."/>
            <person name="Carlson H.K."/>
            <person name="Wetmore K.M."/>
            <person name="Price M.N."/>
            <person name="Iavarone A.T."/>
            <person name="Deutschbauer A.M."/>
            <person name="Arkin A.P."/>
            <person name="Coates J.D."/>
        </authorList>
    </citation>
    <scope>FUNCTION</scope>
    <scope>INDUCTION</scope>
    <scope>DISRUPTION PHENOTYPE</scope>
    <source>
        <strain>ATCC BAA-33 / DSM 13638 / PS</strain>
    </source>
</reference>
<dbReference type="EMBL" id="CP003153">
    <property type="protein sequence ID" value="AEV24576.1"/>
    <property type="molecule type" value="Genomic_DNA"/>
</dbReference>
<dbReference type="RefSeq" id="WP_014235278.1">
    <property type="nucleotide sequence ID" value="NC_016616.1"/>
</dbReference>
<dbReference type="STRING" id="640081.Dsui_0154"/>
<dbReference type="KEGG" id="dsu:Dsui_0154"/>
<dbReference type="eggNOG" id="COG4944">
    <property type="taxonomic scope" value="Bacteria"/>
</dbReference>
<dbReference type="HOGENOM" id="CLU_097826_1_0_4"/>
<dbReference type="OrthoDB" id="6059252at2"/>
<dbReference type="Proteomes" id="UP000005633">
    <property type="component" value="Chromosome"/>
</dbReference>
<dbReference type="GO" id="GO:0005886">
    <property type="term" value="C:plasma membrane"/>
    <property type="evidence" value="ECO:0007669"/>
    <property type="project" value="UniProtKB-SubCell"/>
</dbReference>
<dbReference type="InterPro" id="IPR009495">
    <property type="entry name" value="NrsF"/>
</dbReference>
<dbReference type="Pfam" id="PF06532">
    <property type="entry name" value="NrsF"/>
    <property type="match status" value="1"/>
</dbReference>
<gene>
    <name evidence="3" type="primary">nrsf</name>
    <name type="ordered locus">Dsui_0154</name>
</gene>
<proteinExistence type="evidence at transcript level"/>
<protein>
    <recommendedName>
        <fullName>Probable anti-sigma-F factor NrsF</fullName>
    </recommendedName>
    <alternativeName>
        <fullName evidence="3">Negative regulator of sigma F</fullName>
    </alternativeName>
    <alternativeName>
        <fullName>Regulator of SigF</fullName>
    </alternativeName>
    <alternativeName>
        <fullName>Sigma-F anti-sigma factor NrsF</fullName>
    </alternativeName>
</protein>
<evidence type="ECO:0000255" key="1"/>
<evidence type="ECO:0000269" key="2">
    <source>
    </source>
</evidence>
<evidence type="ECO:0000303" key="3">
    <source>
    </source>
</evidence>
<evidence type="ECO:0000305" key="4"/>
<evidence type="ECO:0000305" key="5">
    <source>
    </source>
</evidence>
<name>NRSF_AZOOP</name>
<keyword id="KW-0997">Cell inner membrane</keyword>
<keyword id="KW-1003">Cell membrane</keyword>
<keyword id="KW-0472">Membrane</keyword>
<keyword id="KW-0346">Stress response</keyword>
<keyword id="KW-0804">Transcription</keyword>
<keyword id="KW-0805">Transcription regulation</keyword>
<keyword id="KW-0812">Transmembrane</keyword>
<keyword id="KW-1133">Transmembrane helix</keyword>
<sequence length="213" mass="22450">MKTEDLITMLAAGAGAVEAPSAAQRYALAIGWGAAGATLLMLALLQVRHDLGLALLLPMFWVKVGFVTCLAAGSLFAVLRLSRPGAKTNWVPAALGLPVLGMWAIAAFTLIEAEPMERSNLFFGDTWKSCPLLIAMLSVPVFAAVLRSMKDLAPTRPRLAGFAAGLLAGAVAAVVYCLHCPELGAPFIGFWYLLGMLIPAAVGVLLGNSMLRW</sequence>
<feature type="chain" id="PRO_0000440883" description="Probable anti-sigma-F factor NrsF">
    <location>
        <begin position="1"/>
        <end position="213"/>
    </location>
</feature>
<feature type="transmembrane region" description="Helical" evidence="1">
    <location>
        <begin position="27"/>
        <end position="47"/>
    </location>
</feature>
<feature type="transmembrane region" description="Helical" evidence="1">
    <location>
        <begin position="51"/>
        <end position="71"/>
    </location>
</feature>
<feature type="transmembrane region" description="Helical" evidence="1">
    <location>
        <begin position="91"/>
        <end position="111"/>
    </location>
</feature>
<feature type="transmembrane region" description="Helical" evidence="1">
    <location>
        <begin position="126"/>
        <end position="146"/>
    </location>
</feature>
<feature type="transmembrane region" description="Helical" evidence="1">
    <location>
        <begin position="159"/>
        <end position="179"/>
    </location>
</feature>
<feature type="transmembrane region" description="Helical" evidence="1">
    <location>
        <begin position="187"/>
        <end position="207"/>
    </location>
</feature>
<accession>G8QM60</accession>
<organism>
    <name type="scientific">Azospira oryzae (strain ATCC BAA-33 / DSM 13638 / PS)</name>
    <name type="common">Dechlorosoma suillum</name>
    <dbReference type="NCBI Taxonomy" id="640081"/>
    <lineage>
        <taxon>Bacteria</taxon>
        <taxon>Pseudomonadati</taxon>
        <taxon>Pseudomonadota</taxon>
        <taxon>Betaproteobacteria</taxon>
        <taxon>Rhodocyclales</taxon>
        <taxon>Rhodocyclaceae</taxon>
        <taxon>Azospira</taxon>
    </lineage>
</organism>
<comment type="function">
    <text evidence="2 5">Probably an anti-sigma factor for extracytoplasmic function (ECF) sigma factor sigma-F (SigF), which responds to (hypo)chlorite. ECF sigma factors are held in an inactive form by a cognate anti-sigma factor (Probable).</text>
</comment>
<comment type="subcellular location">
    <subcellularLocation>
        <location evidence="1">Cell inner membrane</location>
        <topology evidence="1">Multi-pass membrane protein</topology>
    </subcellularLocation>
</comment>
<comment type="induction">
    <text evidence="2">Part of the SigF regulon, induced by chlorite (HClO(2)) under control of SigF. Part of the probable sigF-nrsF operon.</text>
</comment>
<comment type="disruption phenotype">
    <text evidence="2">Growth not inhibited by chlorite during aerobic growth, slight reduction in lag-phase when grown on minimal medium with lactate and chlorite. Up-regulation of the SigF regulon (Dsui_0156 to Dsui_0159).</text>
</comment>
<comment type="similarity">
    <text evidence="4">Belongs to the NrsF anti-sigma-F factor family.</text>
</comment>